<sequence length="158" mass="17202">MSTFTHINCQGEANMVDVSGKQESVREARAEALVTMSPETLNMIISGQHHKGDVFATARIAGIQAAKRTWDLIPLCHPLLLSKVEVSLTPVVERNQVRIESLCRLTGKTGVEMEALTAASVAALTIYDMCKAVQKDIVIEQVRLLEKCGGKSGHFIAK</sequence>
<organism>
    <name type="scientific">Pasteurella multocida (strain Pm70)</name>
    <dbReference type="NCBI Taxonomy" id="272843"/>
    <lineage>
        <taxon>Bacteria</taxon>
        <taxon>Pseudomonadati</taxon>
        <taxon>Pseudomonadota</taxon>
        <taxon>Gammaproteobacteria</taxon>
        <taxon>Pasteurellales</taxon>
        <taxon>Pasteurellaceae</taxon>
        <taxon>Pasteurella</taxon>
    </lineage>
</organism>
<gene>
    <name evidence="1" type="primary">moaC</name>
    <name type="ordered locus">PM0624</name>
</gene>
<feature type="chain" id="PRO_0000097816" description="Cyclic pyranopterin monophosphate synthase">
    <location>
        <begin position="1"/>
        <end position="158"/>
    </location>
</feature>
<feature type="active site" evidence="1">
    <location>
        <position position="128"/>
    </location>
</feature>
<feature type="binding site" evidence="1">
    <location>
        <begin position="75"/>
        <end position="77"/>
    </location>
    <ligand>
        <name>substrate</name>
    </ligand>
</feature>
<feature type="binding site" evidence="1">
    <location>
        <begin position="113"/>
        <end position="114"/>
    </location>
    <ligand>
        <name>substrate</name>
    </ligand>
</feature>
<comment type="function">
    <text evidence="1">Catalyzes the conversion of (8S)-3',8-cyclo-7,8-dihydroguanosine 5'-triphosphate to cyclic pyranopterin monophosphate (cPMP).</text>
</comment>
<comment type="catalytic activity">
    <reaction evidence="1">
        <text>(8S)-3',8-cyclo-7,8-dihydroguanosine 5'-triphosphate = cyclic pyranopterin phosphate + diphosphate</text>
        <dbReference type="Rhea" id="RHEA:49580"/>
        <dbReference type="ChEBI" id="CHEBI:33019"/>
        <dbReference type="ChEBI" id="CHEBI:59648"/>
        <dbReference type="ChEBI" id="CHEBI:131766"/>
        <dbReference type="EC" id="4.6.1.17"/>
    </reaction>
</comment>
<comment type="pathway">
    <text evidence="1">Cofactor biosynthesis; molybdopterin biosynthesis.</text>
</comment>
<comment type="subunit">
    <text evidence="1">Homohexamer; trimer of dimers.</text>
</comment>
<comment type="similarity">
    <text evidence="1">Belongs to the MoaC family.</text>
</comment>
<accession>Q9CN22</accession>
<evidence type="ECO:0000255" key="1">
    <source>
        <dbReference type="HAMAP-Rule" id="MF_01224"/>
    </source>
</evidence>
<name>MOAC_PASMU</name>
<proteinExistence type="inferred from homology"/>
<keyword id="KW-0456">Lyase</keyword>
<keyword id="KW-0501">Molybdenum cofactor biosynthesis</keyword>
<keyword id="KW-1185">Reference proteome</keyword>
<dbReference type="EC" id="4.6.1.17" evidence="1"/>
<dbReference type="EMBL" id="AE004439">
    <property type="protein sequence ID" value="AAK02708.1"/>
    <property type="molecule type" value="Genomic_DNA"/>
</dbReference>
<dbReference type="RefSeq" id="WP_005726474.1">
    <property type="nucleotide sequence ID" value="NC_002663.1"/>
</dbReference>
<dbReference type="SMR" id="Q9CN22"/>
<dbReference type="STRING" id="272843.PM0624"/>
<dbReference type="EnsemblBacteria" id="AAK02708">
    <property type="protein sequence ID" value="AAK02708"/>
    <property type="gene ID" value="PM0624"/>
</dbReference>
<dbReference type="KEGG" id="pmu:PM0624"/>
<dbReference type="PATRIC" id="fig|272843.6.peg.632"/>
<dbReference type="HOGENOM" id="CLU_074693_1_1_6"/>
<dbReference type="OrthoDB" id="9794429at2"/>
<dbReference type="UniPathway" id="UPA00344"/>
<dbReference type="Proteomes" id="UP000000809">
    <property type="component" value="Chromosome"/>
</dbReference>
<dbReference type="GO" id="GO:0061799">
    <property type="term" value="F:cyclic pyranopterin monophosphate synthase activity"/>
    <property type="evidence" value="ECO:0007669"/>
    <property type="project" value="UniProtKB-UniRule"/>
</dbReference>
<dbReference type="GO" id="GO:0006777">
    <property type="term" value="P:Mo-molybdopterin cofactor biosynthetic process"/>
    <property type="evidence" value="ECO:0007669"/>
    <property type="project" value="UniProtKB-UniRule"/>
</dbReference>
<dbReference type="CDD" id="cd01420">
    <property type="entry name" value="MoaC_PE"/>
    <property type="match status" value="1"/>
</dbReference>
<dbReference type="FunFam" id="3.30.70.640:FF:000001">
    <property type="entry name" value="Cyclic pyranopterin monophosphate synthase"/>
    <property type="match status" value="1"/>
</dbReference>
<dbReference type="Gene3D" id="3.30.70.640">
    <property type="entry name" value="Molybdopterin cofactor biosynthesis C (MoaC) domain"/>
    <property type="match status" value="1"/>
</dbReference>
<dbReference type="HAMAP" id="MF_01224_B">
    <property type="entry name" value="MoaC_B"/>
    <property type="match status" value="1"/>
</dbReference>
<dbReference type="InterPro" id="IPR023045">
    <property type="entry name" value="MoaC"/>
</dbReference>
<dbReference type="InterPro" id="IPR047594">
    <property type="entry name" value="MoaC_bact/euk"/>
</dbReference>
<dbReference type="InterPro" id="IPR036522">
    <property type="entry name" value="MoaC_sf"/>
</dbReference>
<dbReference type="InterPro" id="IPR050105">
    <property type="entry name" value="MoCo_biosynth_MoaA/MoaC"/>
</dbReference>
<dbReference type="InterPro" id="IPR002820">
    <property type="entry name" value="Mopterin_CF_biosynth-C_dom"/>
</dbReference>
<dbReference type="NCBIfam" id="TIGR00581">
    <property type="entry name" value="moaC"/>
    <property type="match status" value="1"/>
</dbReference>
<dbReference type="NCBIfam" id="NF006870">
    <property type="entry name" value="PRK09364.1"/>
    <property type="match status" value="1"/>
</dbReference>
<dbReference type="PANTHER" id="PTHR22960">
    <property type="entry name" value="MOLYBDOPTERIN COFACTOR SYNTHESIS PROTEIN A"/>
    <property type="match status" value="1"/>
</dbReference>
<dbReference type="Pfam" id="PF01967">
    <property type="entry name" value="MoaC"/>
    <property type="match status" value="1"/>
</dbReference>
<dbReference type="SUPFAM" id="SSF55040">
    <property type="entry name" value="Molybdenum cofactor biosynthesis protein C, MoaC"/>
    <property type="match status" value="1"/>
</dbReference>
<reference key="1">
    <citation type="journal article" date="2001" name="Proc. Natl. Acad. Sci. U.S.A.">
        <title>Complete genomic sequence of Pasteurella multocida Pm70.</title>
        <authorList>
            <person name="May B.J."/>
            <person name="Zhang Q."/>
            <person name="Li L.L."/>
            <person name="Paustian M.L."/>
            <person name="Whittam T.S."/>
            <person name="Kapur V."/>
        </authorList>
    </citation>
    <scope>NUCLEOTIDE SEQUENCE [LARGE SCALE GENOMIC DNA]</scope>
    <source>
        <strain>Pm70</strain>
    </source>
</reference>
<protein>
    <recommendedName>
        <fullName evidence="1">Cyclic pyranopterin monophosphate synthase</fullName>
        <ecNumber evidence="1">4.6.1.17</ecNumber>
    </recommendedName>
    <alternativeName>
        <fullName evidence="1">Molybdenum cofactor biosynthesis protein C</fullName>
    </alternativeName>
</protein>